<keyword id="KW-0963">Cytoplasm</keyword>
<keyword id="KW-0238">DNA-binding</keyword>
<keyword id="KW-1185">Reference proteome</keyword>
<keyword id="KW-0677">Repeat</keyword>
<keyword id="KW-0804">Transcription</keyword>
<keyword id="KW-0805">Transcription regulation</keyword>
<name>MRAZ_SHEPA</name>
<organism>
    <name type="scientific">Shewanella pealeana (strain ATCC 700345 / ANG-SQ1)</name>
    <dbReference type="NCBI Taxonomy" id="398579"/>
    <lineage>
        <taxon>Bacteria</taxon>
        <taxon>Pseudomonadati</taxon>
        <taxon>Pseudomonadota</taxon>
        <taxon>Gammaproteobacteria</taxon>
        <taxon>Alteromonadales</taxon>
        <taxon>Shewanellaceae</taxon>
        <taxon>Shewanella</taxon>
    </lineage>
</organism>
<sequence>MFSGASAINLDAKGRIAIPKRYRESLHACHNNQLVITVDIQSSCLLLYPIHEWEQVAAKLASLSDTQPTERAIKRMLLGYAHECELDGNGRMLLPPPLRQYANLDKRAMLVGQLNKFELWDEAAWQQQIEQSRIAILNEDLAANERLADFSL</sequence>
<accession>A8H993</accession>
<gene>
    <name evidence="1" type="primary">mraZ</name>
    <name type="ordered locus">Spea_3820</name>
</gene>
<dbReference type="EMBL" id="CP000851">
    <property type="protein sequence ID" value="ABV89130.1"/>
    <property type="molecule type" value="Genomic_DNA"/>
</dbReference>
<dbReference type="RefSeq" id="WP_012157012.1">
    <property type="nucleotide sequence ID" value="NC_009901.1"/>
</dbReference>
<dbReference type="SMR" id="A8H993"/>
<dbReference type="STRING" id="398579.Spea_3820"/>
<dbReference type="KEGG" id="spl:Spea_3820"/>
<dbReference type="eggNOG" id="COG2001">
    <property type="taxonomic scope" value="Bacteria"/>
</dbReference>
<dbReference type="HOGENOM" id="CLU_107907_2_0_6"/>
<dbReference type="OrthoDB" id="9807753at2"/>
<dbReference type="Proteomes" id="UP000002608">
    <property type="component" value="Chromosome"/>
</dbReference>
<dbReference type="GO" id="GO:0005737">
    <property type="term" value="C:cytoplasm"/>
    <property type="evidence" value="ECO:0007669"/>
    <property type="project" value="UniProtKB-UniRule"/>
</dbReference>
<dbReference type="GO" id="GO:0009295">
    <property type="term" value="C:nucleoid"/>
    <property type="evidence" value="ECO:0007669"/>
    <property type="project" value="UniProtKB-SubCell"/>
</dbReference>
<dbReference type="GO" id="GO:0003700">
    <property type="term" value="F:DNA-binding transcription factor activity"/>
    <property type="evidence" value="ECO:0007669"/>
    <property type="project" value="UniProtKB-UniRule"/>
</dbReference>
<dbReference type="GO" id="GO:0000976">
    <property type="term" value="F:transcription cis-regulatory region binding"/>
    <property type="evidence" value="ECO:0007669"/>
    <property type="project" value="TreeGrafter"/>
</dbReference>
<dbReference type="GO" id="GO:2000143">
    <property type="term" value="P:negative regulation of DNA-templated transcription initiation"/>
    <property type="evidence" value="ECO:0007669"/>
    <property type="project" value="TreeGrafter"/>
</dbReference>
<dbReference type="CDD" id="cd16321">
    <property type="entry name" value="MraZ_C"/>
    <property type="match status" value="1"/>
</dbReference>
<dbReference type="CDD" id="cd16320">
    <property type="entry name" value="MraZ_N"/>
    <property type="match status" value="1"/>
</dbReference>
<dbReference type="Gene3D" id="3.40.1550.20">
    <property type="entry name" value="Transcriptional regulator MraZ domain"/>
    <property type="match status" value="1"/>
</dbReference>
<dbReference type="HAMAP" id="MF_01008">
    <property type="entry name" value="MraZ"/>
    <property type="match status" value="1"/>
</dbReference>
<dbReference type="InterPro" id="IPR003444">
    <property type="entry name" value="MraZ"/>
</dbReference>
<dbReference type="InterPro" id="IPR035644">
    <property type="entry name" value="MraZ_C"/>
</dbReference>
<dbReference type="InterPro" id="IPR020603">
    <property type="entry name" value="MraZ_dom"/>
</dbReference>
<dbReference type="InterPro" id="IPR035642">
    <property type="entry name" value="MraZ_N"/>
</dbReference>
<dbReference type="InterPro" id="IPR038619">
    <property type="entry name" value="MraZ_sf"/>
</dbReference>
<dbReference type="InterPro" id="IPR007159">
    <property type="entry name" value="SpoVT-AbrB_dom"/>
</dbReference>
<dbReference type="InterPro" id="IPR037914">
    <property type="entry name" value="SpoVT-AbrB_sf"/>
</dbReference>
<dbReference type="NCBIfam" id="TIGR00242">
    <property type="entry name" value="division/cell wall cluster transcriptional repressor MraZ"/>
    <property type="match status" value="1"/>
</dbReference>
<dbReference type="PANTHER" id="PTHR34701">
    <property type="entry name" value="TRANSCRIPTIONAL REGULATOR MRAZ"/>
    <property type="match status" value="1"/>
</dbReference>
<dbReference type="PANTHER" id="PTHR34701:SF1">
    <property type="entry name" value="TRANSCRIPTIONAL REGULATOR MRAZ"/>
    <property type="match status" value="1"/>
</dbReference>
<dbReference type="Pfam" id="PF02381">
    <property type="entry name" value="MraZ"/>
    <property type="match status" value="2"/>
</dbReference>
<dbReference type="SUPFAM" id="SSF89447">
    <property type="entry name" value="AbrB/MazE/MraZ-like"/>
    <property type="match status" value="1"/>
</dbReference>
<dbReference type="PROSITE" id="PS51740">
    <property type="entry name" value="SPOVT_ABRB"/>
    <property type="match status" value="2"/>
</dbReference>
<evidence type="ECO:0000255" key="1">
    <source>
        <dbReference type="HAMAP-Rule" id="MF_01008"/>
    </source>
</evidence>
<evidence type="ECO:0000255" key="2">
    <source>
        <dbReference type="PROSITE-ProRule" id="PRU01076"/>
    </source>
</evidence>
<feature type="chain" id="PRO_1000084022" description="Transcriptional regulator MraZ">
    <location>
        <begin position="1"/>
        <end position="152"/>
    </location>
</feature>
<feature type="domain" description="SpoVT-AbrB 1" evidence="2">
    <location>
        <begin position="5"/>
        <end position="52"/>
    </location>
</feature>
<feature type="domain" description="SpoVT-AbrB 2" evidence="2">
    <location>
        <begin position="81"/>
        <end position="124"/>
    </location>
</feature>
<reference key="1">
    <citation type="submission" date="2007-10" db="EMBL/GenBank/DDBJ databases">
        <title>Complete sequence of Shewanella pealeana ATCC 700345.</title>
        <authorList>
            <consortium name="US DOE Joint Genome Institute"/>
            <person name="Copeland A."/>
            <person name="Lucas S."/>
            <person name="Lapidus A."/>
            <person name="Barry K."/>
            <person name="Glavina del Rio T."/>
            <person name="Dalin E."/>
            <person name="Tice H."/>
            <person name="Pitluck S."/>
            <person name="Chertkov O."/>
            <person name="Brettin T."/>
            <person name="Bruce D."/>
            <person name="Detter J.C."/>
            <person name="Han C."/>
            <person name="Schmutz J."/>
            <person name="Larimer F."/>
            <person name="Land M."/>
            <person name="Hauser L."/>
            <person name="Kyrpides N."/>
            <person name="Kim E."/>
            <person name="Zhao J.-S.Z."/>
            <person name="Manno D."/>
            <person name="Hawari J."/>
            <person name="Richardson P."/>
        </authorList>
    </citation>
    <scope>NUCLEOTIDE SEQUENCE [LARGE SCALE GENOMIC DNA]</scope>
    <source>
        <strain>ATCC 700345 / ANG-SQ1</strain>
    </source>
</reference>
<comment type="subunit">
    <text evidence="1">Forms oligomers.</text>
</comment>
<comment type="subcellular location">
    <subcellularLocation>
        <location evidence="1">Cytoplasm</location>
        <location evidence="1">Nucleoid</location>
    </subcellularLocation>
</comment>
<comment type="similarity">
    <text evidence="1">Belongs to the MraZ family.</text>
</comment>
<proteinExistence type="inferred from homology"/>
<protein>
    <recommendedName>
        <fullName>Transcriptional regulator MraZ</fullName>
    </recommendedName>
</protein>